<dbReference type="EMBL" id="M95495">
    <property type="protein sequence ID" value="AAA30876.1"/>
    <property type="molecule type" value="mRNA"/>
</dbReference>
<dbReference type="PIR" id="A46270">
    <property type="entry name" value="A46270"/>
</dbReference>
<dbReference type="PIR" id="A48299">
    <property type="entry name" value="A48299"/>
</dbReference>
<dbReference type="RefSeq" id="NP_001003311.1">
    <property type="nucleotide sequence ID" value="NM_001003311.1"/>
</dbReference>
<dbReference type="RefSeq" id="XP_038282756.1">
    <property type="nucleotide sequence ID" value="XM_038426828.1"/>
</dbReference>
<dbReference type="RefSeq" id="XP_038282757.1">
    <property type="nucleotide sequence ID" value="XM_038426829.1"/>
</dbReference>
<dbReference type="RefSeq" id="XP_038282758.1">
    <property type="nucleotide sequence ID" value="XM_038426830.1"/>
</dbReference>
<dbReference type="RefSeq" id="XP_038282759.1">
    <property type="nucleotide sequence ID" value="XM_038426831.1"/>
</dbReference>
<dbReference type="RefSeq" id="XP_038311906.1">
    <property type="nucleotide sequence ID" value="XM_038455978.1"/>
</dbReference>
<dbReference type="RefSeq" id="XP_038311908.1">
    <property type="nucleotide sequence ID" value="XM_038455980.1"/>
</dbReference>
<dbReference type="RefSeq" id="XP_038311909.1">
    <property type="nucleotide sequence ID" value="XM_038455981.1"/>
</dbReference>
<dbReference type="RefSeq" id="XP_038311910.1">
    <property type="nucleotide sequence ID" value="XM_038455982.1"/>
</dbReference>
<dbReference type="RefSeq" id="XP_038421465.1">
    <property type="nucleotide sequence ID" value="XM_038565537.1"/>
</dbReference>
<dbReference type="RefSeq" id="XP_038421466.1">
    <property type="nucleotide sequence ID" value="XM_038565538.1"/>
</dbReference>
<dbReference type="RefSeq" id="XP_038421467.1">
    <property type="nucleotide sequence ID" value="XM_038565539.1"/>
</dbReference>
<dbReference type="RefSeq" id="XP_038421468.1">
    <property type="nucleotide sequence ID" value="XM_038565540.1"/>
</dbReference>
<dbReference type="SMR" id="Q00589"/>
<dbReference type="FunCoup" id="Q00589">
    <property type="interactions" value="7"/>
</dbReference>
<dbReference type="STRING" id="9615.ENSCAFP00000043856"/>
<dbReference type="GlyCosmos" id="Q00589">
    <property type="glycosylation" value="3 sites, No reported glycans"/>
</dbReference>
<dbReference type="iPTMnet" id="Q00589"/>
<dbReference type="PaxDb" id="9612-ENSCAFP00000006683"/>
<dbReference type="GeneID" id="404000"/>
<dbReference type="eggNOG" id="KOG3660">
    <property type="taxonomic scope" value="Eukaryota"/>
</dbReference>
<dbReference type="HOGENOM" id="CLU_006855_9_5_1"/>
<dbReference type="InParanoid" id="Q00589"/>
<dbReference type="OMA" id="WAHCNHT"/>
<dbReference type="OrthoDB" id="6581954at2759"/>
<dbReference type="TreeFam" id="TF343812"/>
<dbReference type="Proteomes" id="UP000002254">
    <property type="component" value="Unplaced"/>
</dbReference>
<dbReference type="Proteomes" id="UP000694429">
    <property type="component" value="Unplaced"/>
</dbReference>
<dbReference type="Proteomes" id="UP000694542">
    <property type="component" value="Unplaced"/>
</dbReference>
<dbReference type="Proteomes" id="UP000805418">
    <property type="component" value="Unplaced"/>
</dbReference>
<dbReference type="GO" id="GO:0042995">
    <property type="term" value="C:cell projection"/>
    <property type="evidence" value="ECO:0000318"/>
    <property type="project" value="GO_Central"/>
</dbReference>
<dbReference type="GO" id="GO:0005886">
    <property type="term" value="C:plasma membrane"/>
    <property type="evidence" value="ECO:0000318"/>
    <property type="project" value="GO_Central"/>
</dbReference>
<dbReference type="GO" id="GO:0005332">
    <property type="term" value="F:gamma-aminobutyric acid:sodium:chloride symporter activity"/>
    <property type="evidence" value="ECO:0000250"/>
    <property type="project" value="UniProtKB"/>
</dbReference>
<dbReference type="GO" id="GO:0005369">
    <property type="term" value="F:taurine:sodium symporter activity"/>
    <property type="evidence" value="ECO:0000314"/>
    <property type="project" value="UniProtKB"/>
</dbReference>
<dbReference type="GO" id="GO:0006865">
    <property type="term" value="P:amino acid transport"/>
    <property type="evidence" value="ECO:0000318"/>
    <property type="project" value="GO_Central"/>
</dbReference>
<dbReference type="GO" id="GO:0006836">
    <property type="term" value="P:neurotransmitter transport"/>
    <property type="evidence" value="ECO:0007669"/>
    <property type="project" value="UniProtKB-KW"/>
</dbReference>
<dbReference type="GO" id="GO:0035725">
    <property type="term" value="P:sodium ion transmembrane transport"/>
    <property type="evidence" value="ECO:0000318"/>
    <property type="project" value="GO_Central"/>
</dbReference>
<dbReference type="GO" id="GO:0015734">
    <property type="term" value="P:taurine transmembrane transport"/>
    <property type="evidence" value="ECO:0000318"/>
    <property type="project" value="GO_Central"/>
</dbReference>
<dbReference type="InterPro" id="IPR000175">
    <property type="entry name" value="Na/ntran_symport"/>
</dbReference>
<dbReference type="InterPro" id="IPR002434">
    <property type="entry name" value="Na/ntran_symport_taurine"/>
</dbReference>
<dbReference type="InterPro" id="IPR037272">
    <property type="entry name" value="SNS_sf"/>
</dbReference>
<dbReference type="PANTHER" id="PTHR11616:SF141">
    <property type="entry name" value="SODIUM- AND CHLORIDE-DEPENDENT TAURINE TRANSPORTER"/>
    <property type="match status" value="1"/>
</dbReference>
<dbReference type="PANTHER" id="PTHR11616">
    <property type="entry name" value="SODIUM/CHLORIDE DEPENDENT TRANSPORTER"/>
    <property type="match status" value="1"/>
</dbReference>
<dbReference type="Pfam" id="PF00209">
    <property type="entry name" value="SNF"/>
    <property type="match status" value="1"/>
</dbReference>
<dbReference type="PRINTS" id="PR00176">
    <property type="entry name" value="NANEUSMPORT"/>
</dbReference>
<dbReference type="PRINTS" id="PR01200">
    <property type="entry name" value="TAUTRANSPORT"/>
</dbReference>
<dbReference type="SUPFAM" id="SSF161070">
    <property type="entry name" value="SNF-like"/>
    <property type="match status" value="1"/>
</dbReference>
<dbReference type="PROSITE" id="PS00610">
    <property type="entry name" value="NA_NEUROTRAN_SYMP_1"/>
    <property type="match status" value="1"/>
</dbReference>
<dbReference type="PROSITE" id="PS00754">
    <property type="entry name" value="NA_NEUROTRAN_SYMP_2"/>
    <property type="match status" value="1"/>
</dbReference>
<dbReference type="PROSITE" id="PS50267">
    <property type="entry name" value="NA_NEUROTRAN_SYMP_3"/>
    <property type="match status" value="1"/>
</dbReference>
<accession>Q00589</accession>
<gene>
    <name type="primary">SLC6A6</name>
</gene>
<name>SC6A6_CANLF</name>
<reference key="1">
    <citation type="journal article" date="1992" name="Proc. Natl. Acad. Sci. U.S.A.">
        <title>Molecular cloning of the cDNA for an MDCK cell Na(+)- and Cl(-)-dependent taurine transporter that is regulated by hypertonicity.</title>
        <authorList>
            <person name="Uchida S."/>
            <person name="Kwon H.M."/>
            <person name="Yamauchi A."/>
            <person name="Preston A.S."/>
            <person name="Marumo F."/>
            <person name="Handler J.S."/>
        </authorList>
    </citation>
    <scope>NUCLEOTIDE SEQUENCE [MRNA]</scope>
    <scope>FUNCTION</scope>
    <scope>TRANSPORTER ACTIVITY</scope>
    <scope>BIOPHYSICOCHEMICAL PROPERTIES</scope>
    <scope>TISSUE SPECIFICITY</scope>
    <scope>ACTIVITY REGULATION</scope>
    <scope>INDUCTION</scope>
    <source>
        <strain>Cocker spaniel</strain>
        <tissue>Kidney</tissue>
    </source>
</reference>
<reference key="2">
    <citation type="journal article" date="1999" name="J. Am. Soc. Nephrol.">
        <title>Ser-322 is a critical site for PKC regulation of the MDCK cell taurine transporter (pNCT).</title>
        <authorList>
            <person name="Han X."/>
            <person name="Budreau A.M."/>
            <person name="Chesney R.W."/>
        </authorList>
    </citation>
    <scope>PHOSPHORYLATION AT SER-322</scope>
    <scope>MUTAGENESIS OF SER-45; THR-175; SER-215; THR-242; SER-322 AND THR-581</scope>
    <scope>FUNCTION</scope>
    <scope>TRANSPORTER ACTIVITY</scope>
    <scope>BIOPHYSICOCHEMICAL PROPERTIES</scope>
</reference>
<comment type="function">
    <text evidence="1 5 6">Mediates sodium- and chloride-dependent transport of taurine (PubMed:10477138, PubMed:1518851). Can also mediate transport of beta-alanine, hypotaurine and gamma-aminobutyric acid (GABA) (By similarity).</text>
</comment>
<comment type="catalytic activity">
    <reaction evidence="1">
        <text>4-aminobutanoate(out) + chloride(out) + 2 Na(+)(out) = 4-aminobutanoate(in) + chloride(in) + 2 Na(+)(in)</text>
        <dbReference type="Rhea" id="RHEA:70687"/>
        <dbReference type="ChEBI" id="CHEBI:17996"/>
        <dbReference type="ChEBI" id="CHEBI:29101"/>
        <dbReference type="ChEBI" id="CHEBI:59888"/>
    </reaction>
    <physiologicalReaction direction="left-to-right" evidence="1">
        <dbReference type="Rhea" id="RHEA:70688"/>
    </physiologicalReaction>
</comment>
<comment type="catalytic activity">
    <reaction evidence="5 6">
        <text>taurine(out) + chloride(out) + 2 Na(+)(out) = taurine(in) + chloride(in) + 2 Na(+)(in)</text>
        <dbReference type="Rhea" id="RHEA:71223"/>
        <dbReference type="ChEBI" id="CHEBI:17996"/>
        <dbReference type="ChEBI" id="CHEBI:29101"/>
        <dbReference type="ChEBI" id="CHEBI:507393"/>
    </reaction>
    <physiologicalReaction direction="left-to-right" evidence="6">
        <dbReference type="Rhea" id="RHEA:71224"/>
    </physiologicalReaction>
</comment>
<comment type="catalytic activity">
    <reaction evidence="1">
        <text>beta-alanine(out) + chloride(out) + 2 Na(+)(out) = beta-alanine(in) + chloride(in) + 2 Na(+)(in)</text>
        <dbReference type="Rhea" id="RHEA:71247"/>
        <dbReference type="ChEBI" id="CHEBI:17996"/>
        <dbReference type="ChEBI" id="CHEBI:29101"/>
        <dbReference type="ChEBI" id="CHEBI:57966"/>
    </reaction>
    <physiologicalReaction direction="left-to-right" evidence="1">
        <dbReference type="Rhea" id="RHEA:71248"/>
    </physiologicalReaction>
</comment>
<comment type="catalytic activity">
    <reaction evidence="1">
        <text>hypotaurine(out) + chloride(out) + 2 Na(+)(out) = hypotaurine(in) + chloride(in) + 2 Na(+)(in)</text>
        <dbReference type="Rhea" id="RHEA:71243"/>
        <dbReference type="ChEBI" id="CHEBI:17996"/>
        <dbReference type="ChEBI" id="CHEBI:29101"/>
        <dbReference type="ChEBI" id="CHEBI:57853"/>
    </reaction>
    <physiologicalReaction direction="left-to-right" evidence="1">
        <dbReference type="Rhea" id="RHEA:71244"/>
    </physiologicalReaction>
</comment>
<comment type="activity regulation">
    <text evidence="6">Taurine transport activity is inhibited by hypotaurine and beta-alanine.</text>
</comment>
<comment type="biophysicochemical properties">
    <kinetics>
        <KM evidence="6">12 uM for taurine</KM>
        <KM evidence="5">7.3 uM for taurine</KM>
    </kinetics>
</comment>
<comment type="subcellular location">
    <subcellularLocation>
        <location evidence="2">Cell membrane</location>
        <topology evidence="3">Multi-pass membrane protein</topology>
    </subcellularLocation>
</comment>
<comment type="tissue specificity">
    <text evidence="6">Renal cortex and medulla, ileal mucosa, brain, liver and heart.</text>
</comment>
<comment type="induction">
    <text evidence="6">Up-regulated in response to hypertonic stress.</text>
</comment>
<comment type="PTM">
    <text evidence="5">Taurine transport activity is down-regulated upon Ser-322 phosphorylation by PKC.</text>
</comment>
<comment type="similarity">
    <text evidence="7">Belongs to the sodium:neurotransmitter symporter (SNF) (TC 2.A.22) family. SLC6A6 subfamily.</text>
</comment>
<evidence type="ECO:0000250" key="1">
    <source>
        <dbReference type="UniProtKB" id="O35316"/>
    </source>
</evidence>
<evidence type="ECO:0000250" key="2">
    <source>
        <dbReference type="UniProtKB" id="P31641"/>
    </source>
</evidence>
<evidence type="ECO:0000255" key="3"/>
<evidence type="ECO:0000256" key="4">
    <source>
        <dbReference type="SAM" id="MobiDB-lite"/>
    </source>
</evidence>
<evidence type="ECO:0000269" key="5">
    <source>
    </source>
</evidence>
<evidence type="ECO:0000269" key="6">
    <source>
    </source>
</evidence>
<evidence type="ECO:0000305" key="7"/>
<sequence length="620" mass="69729">MATKEKLQCLKDFHKDILKPSPGKSPGTRPEDEAEGKPPQREKWSSKIDFVLSVAGGFVGLGNVWRFPYLCYKNGGGAFLIPYFIFLFGGGLPVFFLEVIIGQYTSEGGITCWEKICPLFSGIGYASIVIVSLLNIYYVIILAWATYYLFQSFQSELPWAHCNHSWNTPQCMEDTMRKNKSLWITLSTKNFTSPVTEFWERNVLSLSSGIDDPGSLKWDLALCLLLVWLVCFFCIWKGVKSTGKVVYFTATFPFAMLLVLLVRGLTLPGAGAGIKFYLYPDISRLEDPQVWIDAGTQIFFSYAICLGAMTSLGSYNKYKYNSYRDCMLLGCLNSGTSFVSGFAIFSILGFMAQEQGVDIADVAESGPGLAFIAYPKAVTMMPLPTFWSILFFIMLLLLGLDSQFVEVEGQVTSLVDLYPSFLRKGFRREIFIAFMCSISYLLGLSMVTEGGMYVFQLFDYYAASGVCLLWVAFFECFVIAWIYGSDNLYDGIEDMIGYRPGPWMKYSWAVVTPVLCVGCFIFSLVKYVPLTYNKVYVYPTWAIGLGWSLALSSMMCVPLVMVIRLCQTEGPFLVRLKYLLTPREPNRWAVEREGATPYSSRLAVNGALMKPTHIIVETMM</sequence>
<organism>
    <name type="scientific">Canis lupus familiaris</name>
    <name type="common">Dog</name>
    <name type="synonym">Canis familiaris</name>
    <dbReference type="NCBI Taxonomy" id="9615"/>
    <lineage>
        <taxon>Eukaryota</taxon>
        <taxon>Metazoa</taxon>
        <taxon>Chordata</taxon>
        <taxon>Craniata</taxon>
        <taxon>Vertebrata</taxon>
        <taxon>Euteleostomi</taxon>
        <taxon>Mammalia</taxon>
        <taxon>Eutheria</taxon>
        <taxon>Laurasiatheria</taxon>
        <taxon>Carnivora</taxon>
        <taxon>Caniformia</taxon>
        <taxon>Canidae</taxon>
        <taxon>Canis</taxon>
    </lineage>
</organism>
<proteinExistence type="evidence at protein level"/>
<protein>
    <recommendedName>
        <fullName>Sodium- and chloride-dependent taurine transporter</fullName>
    </recommendedName>
    <alternativeName>
        <fullName>Solute carrier family 6 member 6</fullName>
    </alternativeName>
</protein>
<feature type="chain" id="PRO_0000214766" description="Sodium- and chloride-dependent taurine transporter">
    <location>
        <begin position="1"/>
        <end position="620"/>
    </location>
</feature>
<feature type="topological domain" description="Cytoplasmic" evidence="3">
    <location>
        <begin position="1"/>
        <end position="49"/>
    </location>
</feature>
<feature type="transmembrane region" description="Helical; Name=1" evidence="3">
    <location>
        <begin position="50"/>
        <end position="70"/>
    </location>
</feature>
<feature type="transmembrane region" description="Helical; Name=2" evidence="3">
    <location>
        <begin position="78"/>
        <end position="97"/>
    </location>
</feature>
<feature type="transmembrane region" description="Helical; Name=3" evidence="3">
    <location>
        <begin position="122"/>
        <end position="142"/>
    </location>
</feature>
<feature type="topological domain" description="Extracellular" evidence="3">
    <location>
        <begin position="143"/>
        <end position="217"/>
    </location>
</feature>
<feature type="transmembrane region" description="Helical; Name=4" evidence="3">
    <location>
        <begin position="218"/>
        <end position="236"/>
    </location>
</feature>
<feature type="transmembrane region" description="Helical; Name=5" evidence="3">
    <location>
        <begin position="245"/>
        <end position="262"/>
    </location>
</feature>
<feature type="transmembrane region" description="Helical; Name=6" evidence="3">
    <location>
        <begin position="298"/>
        <end position="315"/>
    </location>
</feature>
<feature type="transmembrane region" description="Helical; Name=7" evidence="3">
    <location>
        <begin position="327"/>
        <end position="348"/>
    </location>
</feature>
<feature type="transmembrane region" description="Helical; Name=8" evidence="3">
    <location>
        <begin position="381"/>
        <end position="400"/>
    </location>
</feature>
<feature type="transmembrane region" description="Helical; Name=9" evidence="3">
    <location>
        <begin position="430"/>
        <end position="448"/>
    </location>
</feature>
<feature type="transmembrane region" description="Helical; Name=10" evidence="3">
    <location>
        <begin position="465"/>
        <end position="485"/>
    </location>
</feature>
<feature type="transmembrane region" description="Helical; Name=11" evidence="3">
    <location>
        <begin position="506"/>
        <end position="525"/>
    </location>
</feature>
<feature type="transmembrane region" description="Helical; Name=12" evidence="3">
    <location>
        <begin position="545"/>
        <end position="563"/>
    </location>
</feature>
<feature type="topological domain" description="Cytoplasmic" evidence="3">
    <location>
        <begin position="564"/>
        <end position="620"/>
    </location>
</feature>
<feature type="region of interest" description="Disordered" evidence="4">
    <location>
        <begin position="1"/>
        <end position="42"/>
    </location>
</feature>
<feature type="compositionally biased region" description="Basic and acidic residues" evidence="4">
    <location>
        <begin position="1"/>
        <end position="18"/>
    </location>
</feature>
<feature type="compositionally biased region" description="Basic and acidic residues" evidence="4">
    <location>
        <begin position="29"/>
        <end position="42"/>
    </location>
</feature>
<feature type="modified residue" description="Phosphoserine" evidence="5">
    <location>
        <position position="322"/>
    </location>
</feature>
<feature type="glycosylation site" description="N-linked (GlcNAc...) asparagine" evidence="3">
    <location>
        <position position="163"/>
    </location>
</feature>
<feature type="glycosylation site" description="N-linked (GlcNAc...) asparagine" evidence="3">
    <location>
        <position position="179"/>
    </location>
</feature>
<feature type="glycosylation site" description="N-linked (GlcNAc...) asparagine" evidence="3">
    <location>
        <position position="190"/>
    </location>
</feature>
<feature type="mutagenesis site" description="No effect on taurine uptake; no effect on phosphorylation by PKC." evidence="5">
    <original>S</original>
    <variation>A</variation>
    <location>
        <position position="45"/>
    </location>
</feature>
<feature type="mutagenesis site" description="No effect on taurine uptake; no effect on phosphorylation by PKC." evidence="5">
    <original>T</original>
    <variation>A</variation>
    <location>
        <position position="175"/>
    </location>
</feature>
<feature type="mutagenesis site" description="No effect on taurine uptake; no effect on phosphorylation by PKC." evidence="5">
    <original>S</original>
    <variation>A</variation>
    <location>
        <position position="215"/>
    </location>
</feature>
<feature type="mutagenesis site" description="No effect on taurine uptake; no effect on phosphorylation by PKC." evidence="5">
    <original>T</original>
    <variation>A</variation>
    <location>
        <position position="242"/>
    </location>
</feature>
<feature type="mutagenesis site" description="3-fold activation of taurine uptake; abolishes phosphorylation by PKC." evidence="5">
    <original>S</original>
    <variation>A</variation>
    <location>
        <position position="322"/>
    </location>
</feature>
<feature type="mutagenesis site" description="No effect on taurine uptake; no effect on phosphorylation by PKC." evidence="5">
    <original>T</original>
    <variation>A</variation>
    <location>
        <position position="581"/>
    </location>
</feature>
<keyword id="KW-1003">Cell membrane</keyword>
<keyword id="KW-0325">Glycoprotein</keyword>
<keyword id="KW-0472">Membrane</keyword>
<keyword id="KW-0532">Neurotransmitter transport</keyword>
<keyword id="KW-0597">Phosphoprotein</keyword>
<keyword id="KW-1185">Reference proteome</keyword>
<keyword id="KW-0769">Symport</keyword>
<keyword id="KW-0812">Transmembrane</keyword>
<keyword id="KW-1133">Transmembrane helix</keyword>
<keyword id="KW-0813">Transport</keyword>